<comment type="function">
    <text evidence="1">RNA-dependent RNA polymerase which is responsible for replication and transcription of virus RNA segments. The transcription of viral mRNAs occurs by a unique mechanism called cap-snatching. 5' methylated caps of cellular mRNAs are cleaved after 10-13 nucleotides by PA. In turn, these short capped RNAs are used as primers by PB1 for transcription of viral mRNAs. During virus replication, PB1 initiates RNA synthesis and copy vRNA into complementary RNA (cRNA) which in turn serves as a template for the production of more vRNAs.</text>
</comment>
<comment type="catalytic activity">
    <reaction evidence="1">
        <text>RNA(n) + a ribonucleoside 5'-triphosphate = RNA(n+1) + diphosphate</text>
        <dbReference type="Rhea" id="RHEA:21248"/>
        <dbReference type="Rhea" id="RHEA-COMP:14527"/>
        <dbReference type="Rhea" id="RHEA-COMP:17342"/>
        <dbReference type="ChEBI" id="CHEBI:33019"/>
        <dbReference type="ChEBI" id="CHEBI:61557"/>
        <dbReference type="ChEBI" id="CHEBI:140395"/>
        <dbReference type="EC" id="2.7.7.48"/>
    </reaction>
</comment>
<comment type="subunit">
    <text evidence="1">Influenza RNA polymerase is composed of three subunits: PB1, PB2 and PA. Interacts (via N-terminus) with PA (via C-terminus). Interacts (via C-terminus) with PB2 (via N-terminus); this interaction is essential for transcription initiation.</text>
</comment>
<comment type="subcellular location">
    <subcellularLocation>
        <location evidence="1">Host nucleus</location>
    </subcellularLocation>
    <subcellularLocation>
        <location evidence="1">Host cytoplasm</location>
    </subcellularLocation>
</comment>
<comment type="PTM">
    <text evidence="1">Phosphorylated by host PRKCA.</text>
</comment>
<comment type="similarity">
    <text evidence="1">Belongs to the influenza viruses polymerase PB1 family.</text>
</comment>
<proteinExistence type="inferred from homology"/>
<keyword id="KW-1262">Eukaryotic host gene expression shutoff by virus</keyword>
<keyword id="KW-1191">Eukaryotic host transcription shutoff by virus</keyword>
<keyword id="KW-1035">Host cytoplasm</keyword>
<keyword id="KW-1190">Host gene expression shutoff by virus</keyword>
<keyword id="KW-1048">Host nucleus</keyword>
<keyword id="KW-0945">Host-virus interaction</keyword>
<keyword id="KW-1104">Inhibition of host RNA polymerase II by virus</keyword>
<keyword id="KW-0547">Nucleotide-binding</keyword>
<keyword id="KW-0548">Nucleotidyltransferase</keyword>
<keyword id="KW-0597">Phosphoprotein</keyword>
<keyword id="KW-0696">RNA-directed RNA polymerase</keyword>
<keyword id="KW-0808">Transferase</keyword>
<keyword id="KW-0693">Viral RNA replication</keyword>
<keyword id="KW-1195">Viral transcription</keyword>
<gene>
    <name evidence="1" type="primary">PB1</name>
</gene>
<sequence length="757" mass="86421">MDVNPTLLFLKVPAQNAISTTFPYTGDPPYSHGTGTGYTMDTVNRTHQYSEKGKWTTNTETGAPQLNPIDGPLPEDNEPSGYAQTDCVLEAMAFLEESHPGIFENSCLETMEIVQQTRVDKLTQGRQTYDWTLNRNQPAATALANTIEIFRSNGLTANESGRLIDFLKDVMESMDKEEMEITTHFQRKRRVRDNMTKKMVTQRTIGKKKQRLNKKSYLIRALTLNTMTKDAERGKLKRRAIATPGMQIRGFVYFVETLARSICEKLEQSGLPVGGNEKKAKLANVVRKMMTNSQDTELSFTITGDNTKWNENQNPRMFLAMITYITRNQPEWFRNVLSIAPIMFSNKMARLGKGYMFESKSMKLRTQIPAEMLANIDLKYFNESTRKKIEKIRPLLIDGTASLSPGMMMGMFNMLSTVLGVSILNLGQKRYTKTTYWWDGLQSSDDFALIVNAPNHEGIQAGVDRFYRTCKLVGINMSKKKSYINRTGTFEFTSFFYRYGFVANFSMELPSFGVSGINESADMSIGVTVIKNNMINNDLGPATAQMALQLFIKDYRYTYRCHRGDTQIQTRRSFELKKLWEQTRSKAGLLVSDGGPNLYNIRNLHIPEVCLKWELMDEDYQGRLCNPLNPFVSHKEIESVNNAVVMPAHGPAKSVEYDAVATTHSWIPKRNRSILNTSQRGILEDEQMYQKCCNLFEKFFPSSSYRRPVGISSMVEAMVSRARIDARIDFESGRIKKEEFAEIMKICSTIEELRRQK</sequence>
<reference key="1">
    <citation type="journal article" date="2002" name="Proc. Natl. Acad. Sci. U.S.A.">
        <title>Emergence of multiple genotypes of H5N1 avian influenza viruses in Hong Kong SAR.</title>
        <authorList>
            <person name="Guan Y."/>
            <person name="Peiris J.S.M."/>
            <person name="Lipatov A.S."/>
            <person name="Ellis T.M."/>
            <person name="Dyrting K.C."/>
            <person name="Krauss S."/>
            <person name="Zhang L.J."/>
            <person name="Webster R.G."/>
            <person name="Shortridge K.F."/>
        </authorList>
    </citation>
    <scope>NUCLEOTIDE SEQUENCE [GENOMIC RNA]</scope>
</reference>
<reference key="2">
    <citation type="submission" date="2008-03" db="EMBL/GenBank/DDBJ databases">
        <authorList>
            <person name="Li K.S."/>
            <person name="Xu K.M."/>
            <person name="Guan Y."/>
        </authorList>
    </citation>
    <scope>SEQUENCE REVISION</scope>
</reference>
<accession>Q809M3</accession>
<dbReference type="EC" id="2.7.7.48" evidence="1"/>
<dbReference type="EMBL" id="AF509174">
    <property type="protein sequence ID" value="AAO53017.2"/>
    <property type="molecule type" value="Genomic_DNA"/>
</dbReference>
<dbReference type="SMR" id="Q809M3"/>
<dbReference type="DrugBank" id="DB12466">
    <property type="generic name" value="Favipiravir"/>
</dbReference>
<dbReference type="GO" id="GO:0030430">
    <property type="term" value="C:host cell cytoplasm"/>
    <property type="evidence" value="ECO:0007669"/>
    <property type="project" value="UniProtKB-SubCell"/>
</dbReference>
<dbReference type="GO" id="GO:0042025">
    <property type="term" value="C:host cell nucleus"/>
    <property type="evidence" value="ECO:0007669"/>
    <property type="project" value="UniProtKB-SubCell"/>
</dbReference>
<dbReference type="GO" id="GO:0000166">
    <property type="term" value="F:nucleotide binding"/>
    <property type="evidence" value="ECO:0007669"/>
    <property type="project" value="UniProtKB-UniRule"/>
</dbReference>
<dbReference type="GO" id="GO:0003723">
    <property type="term" value="F:RNA binding"/>
    <property type="evidence" value="ECO:0007669"/>
    <property type="project" value="InterPro"/>
</dbReference>
<dbReference type="GO" id="GO:0003968">
    <property type="term" value="F:RNA-directed RNA polymerase activity"/>
    <property type="evidence" value="ECO:0007669"/>
    <property type="project" value="UniProtKB-UniRule"/>
</dbReference>
<dbReference type="GO" id="GO:0006351">
    <property type="term" value="P:DNA-templated transcription"/>
    <property type="evidence" value="ECO:0007669"/>
    <property type="project" value="UniProtKB-UniRule"/>
</dbReference>
<dbReference type="GO" id="GO:0039657">
    <property type="term" value="P:symbiont-mediated suppression of host gene expression"/>
    <property type="evidence" value="ECO:0007669"/>
    <property type="project" value="UniProtKB-KW"/>
</dbReference>
<dbReference type="GO" id="GO:0039523">
    <property type="term" value="P:symbiont-mediated suppression of host mRNA transcription via inhibition of RNA polymerase II activity"/>
    <property type="evidence" value="ECO:0007669"/>
    <property type="project" value="UniProtKB-UniRule"/>
</dbReference>
<dbReference type="GO" id="GO:0039694">
    <property type="term" value="P:viral RNA genome replication"/>
    <property type="evidence" value="ECO:0007669"/>
    <property type="project" value="UniProtKB-UniRule"/>
</dbReference>
<dbReference type="GO" id="GO:0019083">
    <property type="term" value="P:viral transcription"/>
    <property type="evidence" value="ECO:0007669"/>
    <property type="project" value="UniProtKB-KW"/>
</dbReference>
<dbReference type="Gene3D" id="6.10.140.720">
    <property type="match status" value="1"/>
</dbReference>
<dbReference type="HAMAP" id="MF_04065">
    <property type="entry name" value="INFV_RDRP"/>
    <property type="match status" value="1"/>
</dbReference>
<dbReference type="InterPro" id="IPR007099">
    <property type="entry name" value="RNA-dir_pol_NSvirus"/>
</dbReference>
<dbReference type="InterPro" id="IPR001407">
    <property type="entry name" value="RNA_pol_PB1_influenza"/>
</dbReference>
<dbReference type="Pfam" id="PF00602">
    <property type="entry name" value="Flu_PB1"/>
    <property type="match status" value="1"/>
</dbReference>
<dbReference type="PIRSF" id="PIRSF000827">
    <property type="entry name" value="RdRPol_OMV"/>
    <property type="match status" value="1"/>
</dbReference>
<dbReference type="PROSITE" id="PS50525">
    <property type="entry name" value="RDRP_SSRNA_NEG_SEG"/>
    <property type="match status" value="1"/>
</dbReference>
<protein>
    <recommendedName>
        <fullName evidence="1">RNA-directed RNA polymerase catalytic subunit</fullName>
        <ecNumber evidence="1">2.7.7.48</ecNumber>
    </recommendedName>
    <alternativeName>
        <fullName evidence="1">Polymerase basic protein 1</fullName>
        <shortName evidence="1">PB1</shortName>
    </alternativeName>
    <alternativeName>
        <fullName evidence="1">RNA-directed RNA polymerase subunit P1</fullName>
    </alternativeName>
</protein>
<name>RDRP_I01A0</name>
<organism>
    <name type="scientific">Influenza A virus (strain A/Silky Chicken/Hong Kong/SF189/2001 H5N1 genotype A)</name>
    <dbReference type="NCBI Taxonomy" id="196430"/>
    <lineage>
        <taxon>Viruses</taxon>
        <taxon>Riboviria</taxon>
        <taxon>Orthornavirae</taxon>
        <taxon>Negarnaviricota</taxon>
        <taxon>Polyploviricotina</taxon>
        <taxon>Insthoviricetes</taxon>
        <taxon>Articulavirales</taxon>
        <taxon>Orthomyxoviridae</taxon>
        <taxon>Alphainfluenzavirus</taxon>
        <taxon>Alphainfluenzavirus influenzae</taxon>
        <taxon>Influenza A virus</taxon>
    </lineage>
</organism>
<feature type="chain" id="PRO_0000311159" description="RNA-directed RNA polymerase catalytic subunit">
    <location>
        <begin position="1"/>
        <end position="757"/>
    </location>
</feature>
<feature type="domain" description="RdRp catalytic" evidence="1">
    <location>
        <begin position="286"/>
        <end position="483"/>
    </location>
</feature>
<feature type="region of interest" description="Disordered" evidence="2">
    <location>
        <begin position="50"/>
        <end position="82"/>
    </location>
</feature>
<feature type="region of interest" description="Promoter-binding site" evidence="1">
    <location>
        <begin position="249"/>
        <end position="256"/>
    </location>
</feature>
<feature type="short sequence motif" description="Nuclear localization signal" evidence="1">
    <location>
        <begin position="187"/>
        <end position="195"/>
    </location>
</feature>
<feature type="short sequence motif" description="Nuclear localization signal" evidence="1">
    <location>
        <begin position="203"/>
        <end position="216"/>
    </location>
</feature>
<feature type="compositionally biased region" description="Polar residues" evidence="2">
    <location>
        <begin position="55"/>
        <end position="64"/>
    </location>
</feature>
<evidence type="ECO:0000255" key="1">
    <source>
        <dbReference type="HAMAP-Rule" id="MF_04065"/>
    </source>
</evidence>
<evidence type="ECO:0000256" key="2">
    <source>
        <dbReference type="SAM" id="MobiDB-lite"/>
    </source>
</evidence>
<organismHost>
    <name type="scientific">Aves</name>
    <dbReference type="NCBI Taxonomy" id="8782"/>
</organismHost>
<organismHost>
    <name type="scientific">Felis catus</name>
    <name type="common">Cat</name>
    <name type="synonym">Felis silvestris catus</name>
    <dbReference type="NCBI Taxonomy" id="9685"/>
</organismHost>
<organismHost>
    <name type="scientific">Homo sapiens</name>
    <name type="common">Human</name>
    <dbReference type="NCBI Taxonomy" id="9606"/>
</organismHost>
<organismHost>
    <name type="scientific">Panthera pardus</name>
    <name type="common">Leopard</name>
    <name type="synonym">Felis pardus</name>
    <dbReference type="NCBI Taxonomy" id="9691"/>
</organismHost>
<organismHost>
    <name type="scientific">Panthera tigris</name>
    <name type="common">Tiger</name>
    <dbReference type="NCBI Taxonomy" id="9694"/>
</organismHost>
<organismHost>
    <name type="scientific">Sus scrofa</name>
    <name type="common">Pig</name>
    <dbReference type="NCBI Taxonomy" id="9823"/>
</organismHost>